<proteinExistence type="inferred from homology"/>
<accession>Q5L407</accession>
<gene>
    <name evidence="1" type="primary">rplL</name>
    <name type="ordered locus">GK0096</name>
</gene>
<dbReference type="EMBL" id="BA000043">
    <property type="protein sequence ID" value="BAD74381.1"/>
    <property type="molecule type" value="Genomic_DNA"/>
</dbReference>
<dbReference type="SMR" id="Q5L407"/>
<dbReference type="STRING" id="235909.GK0096"/>
<dbReference type="KEGG" id="gka:GK0096"/>
<dbReference type="eggNOG" id="COG0222">
    <property type="taxonomic scope" value="Bacteria"/>
</dbReference>
<dbReference type="HOGENOM" id="CLU_086499_3_2_9"/>
<dbReference type="Proteomes" id="UP000001172">
    <property type="component" value="Chromosome"/>
</dbReference>
<dbReference type="GO" id="GO:0022625">
    <property type="term" value="C:cytosolic large ribosomal subunit"/>
    <property type="evidence" value="ECO:0007669"/>
    <property type="project" value="TreeGrafter"/>
</dbReference>
<dbReference type="GO" id="GO:0003729">
    <property type="term" value="F:mRNA binding"/>
    <property type="evidence" value="ECO:0007669"/>
    <property type="project" value="TreeGrafter"/>
</dbReference>
<dbReference type="GO" id="GO:0003735">
    <property type="term" value="F:structural constituent of ribosome"/>
    <property type="evidence" value="ECO:0007669"/>
    <property type="project" value="InterPro"/>
</dbReference>
<dbReference type="GO" id="GO:0006412">
    <property type="term" value="P:translation"/>
    <property type="evidence" value="ECO:0007669"/>
    <property type="project" value="UniProtKB-UniRule"/>
</dbReference>
<dbReference type="CDD" id="cd00387">
    <property type="entry name" value="Ribosomal_L7_L12"/>
    <property type="match status" value="1"/>
</dbReference>
<dbReference type="FunFam" id="1.20.5.710:FF:000002">
    <property type="entry name" value="50S ribosomal protein L7/L12"/>
    <property type="match status" value="1"/>
</dbReference>
<dbReference type="FunFam" id="3.30.1390.10:FF:000001">
    <property type="entry name" value="50S ribosomal protein L7/L12"/>
    <property type="match status" value="1"/>
</dbReference>
<dbReference type="Gene3D" id="3.30.1390.10">
    <property type="match status" value="1"/>
</dbReference>
<dbReference type="Gene3D" id="1.20.5.710">
    <property type="entry name" value="Single helix bin"/>
    <property type="match status" value="1"/>
</dbReference>
<dbReference type="HAMAP" id="MF_00368">
    <property type="entry name" value="Ribosomal_bL12"/>
    <property type="match status" value="1"/>
</dbReference>
<dbReference type="InterPro" id="IPR000206">
    <property type="entry name" value="Ribosomal_bL12"/>
</dbReference>
<dbReference type="InterPro" id="IPR013823">
    <property type="entry name" value="Ribosomal_bL12_C"/>
</dbReference>
<dbReference type="InterPro" id="IPR014719">
    <property type="entry name" value="Ribosomal_bL12_C/ClpS-like"/>
</dbReference>
<dbReference type="InterPro" id="IPR008932">
    <property type="entry name" value="Ribosomal_bL12_oligo"/>
</dbReference>
<dbReference type="InterPro" id="IPR036235">
    <property type="entry name" value="Ribosomal_bL12_oligo_N_sf"/>
</dbReference>
<dbReference type="NCBIfam" id="TIGR00855">
    <property type="entry name" value="L12"/>
    <property type="match status" value="1"/>
</dbReference>
<dbReference type="PANTHER" id="PTHR45987">
    <property type="entry name" value="39S RIBOSOMAL PROTEIN L12"/>
    <property type="match status" value="1"/>
</dbReference>
<dbReference type="PANTHER" id="PTHR45987:SF4">
    <property type="entry name" value="LARGE RIBOSOMAL SUBUNIT PROTEIN BL12M"/>
    <property type="match status" value="1"/>
</dbReference>
<dbReference type="Pfam" id="PF00542">
    <property type="entry name" value="Ribosomal_L12"/>
    <property type="match status" value="1"/>
</dbReference>
<dbReference type="Pfam" id="PF16320">
    <property type="entry name" value="Ribosomal_L12_N"/>
    <property type="match status" value="1"/>
</dbReference>
<dbReference type="SUPFAM" id="SSF54736">
    <property type="entry name" value="ClpS-like"/>
    <property type="match status" value="1"/>
</dbReference>
<dbReference type="SUPFAM" id="SSF48300">
    <property type="entry name" value="Ribosomal protein L7/12, oligomerisation (N-terminal) domain"/>
    <property type="match status" value="1"/>
</dbReference>
<feature type="chain" id="PRO_0000243426" description="Large ribosomal subunit protein bL12">
    <location>
        <begin position="1"/>
        <end position="123"/>
    </location>
</feature>
<keyword id="KW-1185">Reference proteome</keyword>
<keyword id="KW-0687">Ribonucleoprotein</keyword>
<keyword id="KW-0689">Ribosomal protein</keyword>
<reference key="1">
    <citation type="journal article" date="2004" name="Nucleic Acids Res.">
        <title>Thermoadaptation trait revealed by the genome sequence of thermophilic Geobacillus kaustophilus.</title>
        <authorList>
            <person name="Takami H."/>
            <person name="Takaki Y."/>
            <person name="Chee G.-J."/>
            <person name="Nishi S."/>
            <person name="Shimamura S."/>
            <person name="Suzuki H."/>
            <person name="Matsui S."/>
            <person name="Uchiyama I."/>
        </authorList>
    </citation>
    <scope>NUCLEOTIDE SEQUENCE [LARGE SCALE GENOMIC DNA]</scope>
    <source>
        <strain>HTA426</strain>
    </source>
</reference>
<sequence length="123" mass="12968">MMTKEQIIEAVKNMTVLELNELVKAIEEEFGVTAAAPVVVAGGAAAGAEAAAEKTEFDVILADAGAQKIKVIKVVREITGLGLKEAKDLVDNTPKPIKEGIAKEEAEEIKAKLEEAGAKVEIK</sequence>
<comment type="function">
    <text evidence="1">Forms part of the ribosomal stalk which helps the ribosome interact with GTP-bound translation factors. Is thus essential for accurate translation.</text>
</comment>
<comment type="subunit">
    <text evidence="1">Homodimer. Part of the ribosomal stalk of the 50S ribosomal subunit. Forms a multimeric L10(L12)X complex, where L10 forms an elongated spine to which 2 to 4 L12 dimers bind in a sequential fashion. Binds GTP-bound translation factors.</text>
</comment>
<comment type="similarity">
    <text evidence="1">Belongs to the bacterial ribosomal protein bL12 family.</text>
</comment>
<evidence type="ECO:0000255" key="1">
    <source>
        <dbReference type="HAMAP-Rule" id="MF_00368"/>
    </source>
</evidence>
<evidence type="ECO:0000305" key="2"/>
<name>RL7_GEOKA</name>
<organism>
    <name type="scientific">Geobacillus kaustophilus (strain HTA426)</name>
    <dbReference type="NCBI Taxonomy" id="235909"/>
    <lineage>
        <taxon>Bacteria</taxon>
        <taxon>Bacillati</taxon>
        <taxon>Bacillota</taxon>
        <taxon>Bacilli</taxon>
        <taxon>Bacillales</taxon>
        <taxon>Anoxybacillaceae</taxon>
        <taxon>Geobacillus</taxon>
        <taxon>Geobacillus thermoleovorans group</taxon>
    </lineage>
</organism>
<protein>
    <recommendedName>
        <fullName evidence="1">Large ribosomal subunit protein bL12</fullName>
    </recommendedName>
    <alternativeName>
        <fullName evidence="2">50S ribosomal protein L7/L12</fullName>
    </alternativeName>
</protein>